<feature type="chain" id="PRO_0000265548" description="Transcription antitermination protein NusB">
    <location>
        <begin position="1"/>
        <end position="140"/>
    </location>
</feature>
<gene>
    <name evidence="1" type="primary">nusB</name>
    <name type="ordered locus">MXAN_4761</name>
</gene>
<dbReference type="EMBL" id="CP000113">
    <property type="protein sequence ID" value="ABF86960.1"/>
    <property type="molecule type" value="Genomic_DNA"/>
</dbReference>
<dbReference type="RefSeq" id="WP_011554748.1">
    <property type="nucleotide sequence ID" value="NC_008095.1"/>
</dbReference>
<dbReference type="SMR" id="Q1D350"/>
<dbReference type="STRING" id="246197.MXAN_4761"/>
<dbReference type="EnsemblBacteria" id="ABF86960">
    <property type="protein sequence ID" value="ABF86960"/>
    <property type="gene ID" value="MXAN_4761"/>
</dbReference>
<dbReference type="GeneID" id="41362060"/>
<dbReference type="KEGG" id="mxa:MXAN_4761"/>
<dbReference type="eggNOG" id="COG0781">
    <property type="taxonomic scope" value="Bacteria"/>
</dbReference>
<dbReference type="HOGENOM" id="CLU_087843_3_3_7"/>
<dbReference type="OrthoDB" id="9797817at2"/>
<dbReference type="Proteomes" id="UP000002402">
    <property type="component" value="Chromosome"/>
</dbReference>
<dbReference type="GO" id="GO:0005829">
    <property type="term" value="C:cytosol"/>
    <property type="evidence" value="ECO:0007669"/>
    <property type="project" value="TreeGrafter"/>
</dbReference>
<dbReference type="GO" id="GO:0003723">
    <property type="term" value="F:RNA binding"/>
    <property type="evidence" value="ECO:0007669"/>
    <property type="project" value="UniProtKB-UniRule"/>
</dbReference>
<dbReference type="GO" id="GO:0006353">
    <property type="term" value="P:DNA-templated transcription termination"/>
    <property type="evidence" value="ECO:0007669"/>
    <property type="project" value="UniProtKB-UniRule"/>
</dbReference>
<dbReference type="GO" id="GO:0031564">
    <property type="term" value="P:transcription antitermination"/>
    <property type="evidence" value="ECO:0007669"/>
    <property type="project" value="UniProtKB-KW"/>
</dbReference>
<dbReference type="CDD" id="cd00619">
    <property type="entry name" value="Terminator_NusB"/>
    <property type="match status" value="1"/>
</dbReference>
<dbReference type="Gene3D" id="1.10.940.10">
    <property type="entry name" value="NusB-like"/>
    <property type="match status" value="1"/>
</dbReference>
<dbReference type="HAMAP" id="MF_00073">
    <property type="entry name" value="NusB"/>
    <property type="match status" value="1"/>
</dbReference>
<dbReference type="InterPro" id="IPR035926">
    <property type="entry name" value="NusB-like_sf"/>
</dbReference>
<dbReference type="InterPro" id="IPR011605">
    <property type="entry name" value="NusB_fam"/>
</dbReference>
<dbReference type="InterPro" id="IPR006027">
    <property type="entry name" value="NusB_RsmB_TIM44"/>
</dbReference>
<dbReference type="NCBIfam" id="TIGR01951">
    <property type="entry name" value="nusB"/>
    <property type="match status" value="1"/>
</dbReference>
<dbReference type="PANTHER" id="PTHR11078:SF3">
    <property type="entry name" value="ANTITERMINATION NUSB DOMAIN-CONTAINING PROTEIN"/>
    <property type="match status" value="1"/>
</dbReference>
<dbReference type="PANTHER" id="PTHR11078">
    <property type="entry name" value="N UTILIZATION SUBSTANCE PROTEIN B-RELATED"/>
    <property type="match status" value="1"/>
</dbReference>
<dbReference type="Pfam" id="PF01029">
    <property type="entry name" value="NusB"/>
    <property type="match status" value="1"/>
</dbReference>
<dbReference type="SUPFAM" id="SSF48013">
    <property type="entry name" value="NusB-like"/>
    <property type="match status" value="1"/>
</dbReference>
<proteinExistence type="inferred from homology"/>
<sequence length="140" mass="15930">MGARRTGRERALQALYQLEMATATTAEALESAWSAAEESNKRDPDAVKFARELVEGVQSHRDEIDQLIERHSHNWRLDRMSRIDRNVLRLGIFELKYRPDIPRKVSINEAVELGKNFGNEESSAFVNGLLDRVAVALNKP</sequence>
<reference key="1">
    <citation type="journal article" date="2006" name="Proc. Natl. Acad. Sci. U.S.A.">
        <title>Evolution of sensory complexity recorded in a myxobacterial genome.</title>
        <authorList>
            <person name="Goldman B.S."/>
            <person name="Nierman W.C."/>
            <person name="Kaiser D."/>
            <person name="Slater S.C."/>
            <person name="Durkin A.S."/>
            <person name="Eisen J.A."/>
            <person name="Ronning C.M."/>
            <person name="Barbazuk W.B."/>
            <person name="Blanchard M."/>
            <person name="Field C."/>
            <person name="Halling C."/>
            <person name="Hinkle G."/>
            <person name="Iartchuk O."/>
            <person name="Kim H.S."/>
            <person name="Mackenzie C."/>
            <person name="Madupu R."/>
            <person name="Miller N."/>
            <person name="Shvartsbeyn A."/>
            <person name="Sullivan S.A."/>
            <person name="Vaudin M."/>
            <person name="Wiegand R."/>
            <person name="Kaplan H.B."/>
        </authorList>
    </citation>
    <scope>NUCLEOTIDE SEQUENCE [LARGE SCALE GENOMIC DNA]</scope>
    <source>
        <strain>DK1622</strain>
    </source>
</reference>
<accession>Q1D350</accession>
<protein>
    <recommendedName>
        <fullName evidence="1">Transcription antitermination protein NusB</fullName>
    </recommendedName>
    <alternativeName>
        <fullName evidence="1">Antitermination factor NusB</fullName>
    </alternativeName>
</protein>
<comment type="function">
    <text evidence="1">Involved in transcription antitermination. Required for transcription of ribosomal RNA (rRNA) genes. Binds specifically to the boxA antiterminator sequence of the ribosomal RNA (rrn) operons.</text>
</comment>
<comment type="similarity">
    <text evidence="1">Belongs to the NusB family.</text>
</comment>
<organism>
    <name type="scientific">Myxococcus xanthus (strain DK1622)</name>
    <dbReference type="NCBI Taxonomy" id="246197"/>
    <lineage>
        <taxon>Bacteria</taxon>
        <taxon>Pseudomonadati</taxon>
        <taxon>Myxococcota</taxon>
        <taxon>Myxococcia</taxon>
        <taxon>Myxococcales</taxon>
        <taxon>Cystobacterineae</taxon>
        <taxon>Myxococcaceae</taxon>
        <taxon>Myxococcus</taxon>
    </lineage>
</organism>
<name>NUSB_MYXXD</name>
<evidence type="ECO:0000255" key="1">
    <source>
        <dbReference type="HAMAP-Rule" id="MF_00073"/>
    </source>
</evidence>
<keyword id="KW-1185">Reference proteome</keyword>
<keyword id="KW-0694">RNA-binding</keyword>
<keyword id="KW-0804">Transcription</keyword>
<keyword id="KW-0889">Transcription antitermination</keyword>
<keyword id="KW-0805">Transcription regulation</keyword>